<organism>
    <name type="scientific">Escherichia coli (strain K12 / MC4100 / BW2952)</name>
    <dbReference type="NCBI Taxonomy" id="595496"/>
    <lineage>
        <taxon>Bacteria</taxon>
        <taxon>Pseudomonadati</taxon>
        <taxon>Pseudomonadota</taxon>
        <taxon>Gammaproteobacteria</taxon>
        <taxon>Enterobacterales</taxon>
        <taxon>Enterobacteriaceae</taxon>
        <taxon>Escherichia</taxon>
    </lineage>
</organism>
<evidence type="ECO:0000255" key="1">
    <source>
        <dbReference type="HAMAP-Rule" id="MF_00030"/>
    </source>
</evidence>
<evidence type="ECO:0000255" key="2">
    <source>
        <dbReference type="PROSITE-ProRule" id="PRU01175"/>
    </source>
</evidence>
<reference key="1">
    <citation type="journal article" date="2009" name="J. Bacteriol.">
        <title>Genomic sequencing reveals regulatory mutations and recombinational events in the widely used MC4100 lineage of Escherichia coli K-12.</title>
        <authorList>
            <person name="Ferenci T."/>
            <person name="Zhou Z."/>
            <person name="Betteridge T."/>
            <person name="Ren Y."/>
            <person name="Liu Y."/>
            <person name="Feng L."/>
            <person name="Reeves P.R."/>
            <person name="Wang L."/>
        </authorList>
    </citation>
    <scope>NUCLEOTIDE SEQUENCE [LARGE SCALE GENOMIC DNA]</scope>
    <source>
        <strain>K12 / MC4100 / BW2952</strain>
    </source>
</reference>
<comment type="function">
    <text evidence="1">dGTPase preferentially hydrolyzes dGTP over the other canonical NTPs.</text>
</comment>
<comment type="catalytic activity">
    <reaction evidence="1">
        <text>dGTP + H2O = 2'-deoxyguanosine + triphosphate + H(+)</text>
        <dbReference type="Rhea" id="RHEA:15193"/>
        <dbReference type="ChEBI" id="CHEBI:15377"/>
        <dbReference type="ChEBI" id="CHEBI:15378"/>
        <dbReference type="ChEBI" id="CHEBI:17172"/>
        <dbReference type="ChEBI" id="CHEBI:18036"/>
        <dbReference type="ChEBI" id="CHEBI:61429"/>
        <dbReference type="EC" id="3.1.5.1"/>
    </reaction>
</comment>
<comment type="cofactor">
    <cofactor evidence="1">
        <name>Mg(2+)</name>
        <dbReference type="ChEBI" id="CHEBI:18420"/>
    </cofactor>
</comment>
<comment type="subunit">
    <text evidence="1">Homotetramer.</text>
</comment>
<comment type="similarity">
    <text evidence="1">Belongs to the dGTPase family. Type 1 subfamily.</text>
</comment>
<sequence>MAQIDFRKKINWHRRYRSPQGVKTEHEILRIFESDRGRIINSPAIRRLQQKTQVFPLERNAAVRTRLTHSMEVQQVGRYIAKEILSRLKELKLLEAYGLDELTGPFESIVEMSCLMHDIGNPPFGHFGEAAINDWFRQRLHPEDAESQPLTDDRCSVAALRLRDGEEPLNELRRKIRQDLCHFEGNAQGIRLVHTLMRMNLTWAQVGGILKYTRPAWWRGETPETHHYLMKKPGYYLSEEAYIARLRKELNLALYSRFPLTWIMEAADDISYCVADLEDAVEKRIFTVEQLYHHLHEAWGQHEKGSLFSLVVENAWEKSRSNSLSRSTEDQFFMYLRVNTLNKLVPYAAQRFIDNLPAIFAGTFNHALLEDASECSDLLKLYKNVAVKHVFSHPDVERLELQGYRVISGLLEIYRPLLSLSLSDFTELVEKERVKRFPIESRLFHKLSTRHRLAYVEAVSKLPSDSPEFPLWEYYYRCRLLQDYISGMTDLYAWDEYRRLMAVEQ</sequence>
<dbReference type="EC" id="3.1.5.1" evidence="1"/>
<dbReference type="EMBL" id="CP001396">
    <property type="protein sequence ID" value="ACR62743.1"/>
    <property type="molecule type" value="Genomic_DNA"/>
</dbReference>
<dbReference type="RefSeq" id="WP_000057073.1">
    <property type="nucleotide sequence ID" value="NC_012759.1"/>
</dbReference>
<dbReference type="SMR" id="C4ZRQ3"/>
<dbReference type="KEGG" id="ebw:BWG_0153"/>
<dbReference type="HOGENOM" id="CLU_028163_2_1_6"/>
<dbReference type="GO" id="GO:0008832">
    <property type="term" value="F:dGTPase activity"/>
    <property type="evidence" value="ECO:0007669"/>
    <property type="project" value="UniProtKB-UniRule"/>
</dbReference>
<dbReference type="GO" id="GO:0000287">
    <property type="term" value="F:magnesium ion binding"/>
    <property type="evidence" value="ECO:0007669"/>
    <property type="project" value="UniProtKB-UniRule"/>
</dbReference>
<dbReference type="GO" id="GO:0006203">
    <property type="term" value="P:dGTP catabolic process"/>
    <property type="evidence" value="ECO:0007669"/>
    <property type="project" value="InterPro"/>
</dbReference>
<dbReference type="CDD" id="cd00077">
    <property type="entry name" value="HDc"/>
    <property type="match status" value="1"/>
</dbReference>
<dbReference type="FunFam" id="1.10.3210.10:FF:000009">
    <property type="entry name" value="Deoxyguanosinetriphosphate triphosphohydrolase"/>
    <property type="match status" value="1"/>
</dbReference>
<dbReference type="FunFam" id="1.10.3210.10:FF:000010">
    <property type="entry name" value="Deoxyguanosinetriphosphate triphosphohydrolase"/>
    <property type="match status" value="1"/>
</dbReference>
<dbReference type="FunFam" id="1.10.3410.10:FF:000001">
    <property type="entry name" value="Deoxyguanosinetriphosphate triphosphohydrolase"/>
    <property type="match status" value="1"/>
</dbReference>
<dbReference type="Gene3D" id="1.10.3210.10">
    <property type="entry name" value="Hypothetical protein af1432"/>
    <property type="match status" value="2"/>
</dbReference>
<dbReference type="Gene3D" id="1.10.3410.10">
    <property type="entry name" value="putative deoxyguanosinetriphosphate triphosphohydrolase like domain"/>
    <property type="match status" value="1"/>
</dbReference>
<dbReference type="HAMAP" id="MF_00030">
    <property type="entry name" value="dGTPase_type1"/>
    <property type="match status" value="1"/>
</dbReference>
<dbReference type="InterPro" id="IPR023293">
    <property type="entry name" value="dGTP_triP_hydro_central_sf"/>
</dbReference>
<dbReference type="InterPro" id="IPR006261">
    <property type="entry name" value="dGTPase"/>
</dbReference>
<dbReference type="InterPro" id="IPR050135">
    <property type="entry name" value="dGTPase-like"/>
</dbReference>
<dbReference type="InterPro" id="IPR020779">
    <property type="entry name" value="dNTPase_1"/>
</dbReference>
<dbReference type="InterPro" id="IPR003607">
    <property type="entry name" value="HD/PDEase_dom"/>
</dbReference>
<dbReference type="InterPro" id="IPR006674">
    <property type="entry name" value="HD_domain"/>
</dbReference>
<dbReference type="NCBIfam" id="TIGR01353">
    <property type="entry name" value="dGTP_triPase"/>
    <property type="match status" value="1"/>
</dbReference>
<dbReference type="NCBIfam" id="NF003429">
    <property type="entry name" value="PRK04926.1"/>
    <property type="match status" value="1"/>
</dbReference>
<dbReference type="PANTHER" id="PTHR11373:SF32">
    <property type="entry name" value="DEOXYGUANOSINETRIPHOSPHATE TRIPHOSPHOHYDROLASE"/>
    <property type="match status" value="1"/>
</dbReference>
<dbReference type="PANTHER" id="PTHR11373">
    <property type="entry name" value="DEOXYNUCLEOSIDE TRIPHOSPHATE TRIPHOSPHOHYDROLASE"/>
    <property type="match status" value="1"/>
</dbReference>
<dbReference type="Pfam" id="PF01966">
    <property type="entry name" value="HD"/>
    <property type="match status" value="1"/>
</dbReference>
<dbReference type="SMART" id="SM00471">
    <property type="entry name" value="HDc"/>
    <property type="match status" value="1"/>
</dbReference>
<dbReference type="SUPFAM" id="SSF109604">
    <property type="entry name" value="HD-domain/PDEase-like"/>
    <property type="match status" value="1"/>
</dbReference>
<dbReference type="PROSITE" id="PS51831">
    <property type="entry name" value="HD"/>
    <property type="match status" value="1"/>
</dbReference>
<accession>C4ZRQ3</accession>
<gene>
    <name evidence="1" type="primary">dgt</name>
    <name type="ordered locus">BWG_0153</name>
</gene>
<protein>
    <recommendedName>
        <fullName evidence="1">Deoxyguanosinetriphosphate triphosphohydrolase</fullName>
        <shortName evidence="1">dGTP triphosphohydrolase</shortName>
        <shortName evidence="1">dGTPase</shortName>
        <ecNumber evidence="1">3.1.5.1</ecNumber>
    </recommendedName>
</protein>
<name>DGTP_ECOBW</name>
<proteinExistence type="inferred from homology"/>
<feature type="chain" id="PRO_1000201981" description="Deoxyguanosinetriphosphate triphosphohydrolase">
    <location>
        <begin position="1"/>
        <end position="505"/>
    </location>
</feature>
<feature type="domain" description="HD" evidence="2">
    <location>
        <begin position="66"/>
        <end position="273"/>
    </location>
</feature>
<keyword id="KW-0378">Hydrolase</keyword>
<keyword id="KW-0460">Magnesium</keyword>